<reference key="1">
    <citation type="journal article" date="2008" name="Appl. Environ. Microbiol.">
        <title>Genome of the epsilonproteobacterial chemolithoautotroph Sulfurimonas denitrificans.</title>
        <authorList>
            <person name="Sievert S.M."/>
            <person name="Scott K.M."/>
            <person name="Klotz M.G."/>
            <person name="Chain P.S.G."/>
            <person name="Hauser L.J."/>
            <person name="Hemp J."/>
            <person name="Huegler M."/>
            <person name="Land M."/>
            <person name="Lapidus A."/>
            <person name="Larimer F.W."/>
            <person name="Lucas S."/>
            <person name="Malfatti S.A."/>
            <person name="Meyer F."/>
            <person name="Paulsen I.T."/>
            <person name="Ren Q."/>
            <person name="Simon J."/>
            <person name="Bailey K."/>
            <person name="Diaz E."/>
            <person name="Fitzpatrick K.A."/>
            <person name="Glover B."/>
            <person name="Gwatney N."/>
            <person name="Korajkic A."/>
            <person name="Long A."/>
            <person name="Mobberley J.M."/>
            <person name="Pantry S.N."/>
            <person name="Pazder G."/>
            <person name="Peterson S."/>
            <person name="Quintanilla J.D."/>
            <person name="Sprinkle R."/>
            <person name="Stephens J."/>
            <person name="Thomas P."/>
            <person name="Vaughn R."/>
            <person name="Weber M.J."/>
            <person name="Wooten L.L."/>
        </authorList>
    </citation>
    <scope>NUCLEOTIDE SEQUENCE [LARGE SCALE GENOMIC DNA]</scope>
    <source>
        <strain>ATCC 33889 / DSM 1251</strain>
    </source>
</reference>
<protein>
    <recommendedName>
        <fullName evidence="1">Glutamyl-tRNA(Gln) amidotransferase subunit A</fullName>
        <shortName evidence="1">Glu-ADT subunit A</shortName>
        <ecNumber evidence="1">6.3.5.7</ecNumber>
    </recommendedName>
</protein>
<feature type="chain" id="PRO_0000241174" description="Glutamyl-tRNA(Gln) amidotransferase subunit A">
    <location>
        <begin position="1"/>
        <end position="447"/>
    </location>
</feature>
<feature type="active site" description="Charge relay system" evidence="1">
    <location>
        <position position="50"/>
    </location>
</feature>
<feature type="active site" description="Charge relay system" evidence="1">
    <location>
        <position position="125"/>
    </location>
</feature>
<feature type="active site" description="Acyl-ester intermediate" evidence="1">
    <location>
        <position position="149"/>
    </location>
</feature>
<name>GATA_SULDN</name>
<comment type="function">
    <text evidence="1">Allows the formation of correctly charged Gln-tRNA(Gln) through the transamidation of misacylated Glu-tRNA(Gln) in organisms which lack glutaminyl-tRNA synthetase. The reaction takes place in the presence of glutamine and ATP through an activated gamma-phospho-Glu-tRNA(Gln).</text>
</comment>
<comment type="catalytic activity">
    <reaction evidence="1">
        <text>L-glutamyl-tRNA(Gln) + L-glutamine + ATP + H2O = L-glutaminyl-tRNA(Gln) + L-glutamate + ADP + phosphate + H(+)</text>
        <dbReference type="Rhea" id="RHEA:17521"/>
        <dbReference type="Rhea" id="RHEA-COMP:9681"/>
        <dbReference type="Rhea" id="RHEA-COMP:9684"/>
        <dbReference type="ChEBI" id="CHEBI:15377"/>
        <dbReference type="ChEBI" id="CHEBI:15378"/>
        <dbReference type="ChEBI" id="CHEBI:29985"/>
        <dbReference type="ChEBI" id="CHEBI:30616"/>
        <dbReference type="ChEBI" id="CHEBI:43474"/>
        <dbReference type="ChEBI" id="CHEBI:58359"/>
        <dbReference type="ChEBI" id="CHEBI:78520"/>
        <dbReference type="ChEBI" id="CHEBI:78521"/>
        <dbReference type="ChEBI" id="CHEBI:456216"/>
        <dbReference type="EC" id="6.3.5.7"/>
    </reaction>
</comment>
<comment type="subunit">
    <text evidence="1">Heterotrimer of A, B and C subunits.</text>
</comment>
<comment type="similarity">
    <text evidence="1">Belongs to the amidase family. GatA subfamily.</text>
</comment>
<organism>
    <name type="scientific">Sulfurimonas denitrificans (strain ATCC 33889 / DSM 1251)</name>
    <name type="common">Thiomicrospira denitrificans (strain ATCC 33889 / DSM 1251)</name>
    <dbReference type="NCBI Taxonomy" id="326298"/>
    <lineage>
        <taxon>Bacteria</taxon>
        <taxon>Pseudomonadati</taxon>
        <taxon>Campylobacterota</taxon>
        <taxon>Epsilonproteobacteria</taxon>
        <taxon>Campylobacterales</taxon>
        <taxon>Sulfurimonadaceae</taxon>
        <taxon>Sulfurimonas</taxon>
    </lineage>
</organism>
<dbReference type="EC" id="6.3.5.7" evidence="1"/>
<dbReference type="EMBL" id="CP000153">
    <property type="protein sequence ID" value="ABB44052.1"/>
    <property type="molecule type" value="Genomic_DNA"/>
</dbReference>
<dbReference type="RefSeq" id="WP_011372405.1">
    <property type="nucleotide sequence ID" value="NC_007575.1"/>
</dbReference>
<dbReference type="SMR" id="Q30SH9"/>
<dbReference type="STRING" id="326298.Suden_0773"/>
<dbReference type="KEGG" id="tdn:Suden_0773"/>
<dbReference type="eggNOG" id="COG0154">
    <property type="taxonomic scope" value="Bacteria"/>
</dbReference>
<dbReference type="HOGENOM" id="CLU_009600_0_3_7"/>
<dbReference type="OrthoDB" id="9811471at2"/>
<dbReference type="Proteomes" id="UP000002714">
    <property type="component" value="Chromosome"/>
</dbReference>
<dbReference type="GO" id="GO:0030956">
    <property type="term" value="C:glutamyl-tRNA(Gln) amidotransferase complex"/>
    <property type="evidence" value="ECO:0007669"/>
    <property type="project" value="InterPro"/>
</dbReference>
<dbReference type="GO" id="GO:0005524">
    <property type="term" value="F:ATP binding"/>
    <property type="evidence" value="ECO:0007669"/>
    <property type="project" value="UniProtKB-KW"/>
</dbReference>
<dbReference type="GO" id="GO:0050567">
    <property type="term" value="F:glutaminyl-tRNA synthase (glutamine-hydrolyzing) activity"/>
    <property type="evidence" value="ECO:0007669"/>
    <property type="project" value="UniProtKB-UniRule"/>
</dbReference>
<dbReference type="GO" id="GO:0006412">
    <property type="term" value="P:translation"/>
    <property type="evidence" value="ECO:0007669"/>
    <property type="project" value="UniProtKB-UniRule"/>
</dbReference>
<dbReference type="Gene3D" id="3.90.1300.10">
    <property type="entry name" value="Amidase signature (AS) domain"/>
    <property type="match status" value="1"/>
</dbReference>
<dbReference type="HAMAP" id="MF_00120">
    <property type="entry name" value="GatA"/>
    <property type="match status" value="1"/>
</dbReference>
<dbReference type="InterPro" id="IPR000120">
    <property type="entry name" value="Amidase"/>
</dbReference>
<dbReference type="InterPro" id="IPR020556">
    <property type="entry name" value="Amidase_CS"/>
</dbReference>
<dbReference type="InterPro" id="IPR023631">
    <property type="entry name" value="Amidase_dom"/>
</dbReference>
<dbReference type="InterPro" id="IPR036928">
    <property type="entry name" value="AS_sf"/>
</dbReference>
<dbReference type="InterPro" id="IPR004412">
    <property type="entry name" value="GatA"/>
</dbReference>
<dbReference type="NCBIfam" id="TIGR00132">
    <property type="entry name" value="gatA"/>
    <property type="match status" value="1"/>
</dbReference>
<dbReference type="PANTHER" id="PTHR11895:SF151">
    <property type="entry name" value="GLUTAMYL-TRNA(GLN) AMIDOTRANSFERASE SUBUNIT A"/>
    <property type="match status" value="1"/>
</dbReference>
<dbReference type="PANTHER" id="PTHR11895">
    <property type="entry name" value="TRANSAMIDASE"/>
    <property type="match status" value="1"/>
</dbReference>
<dbReference type="Pfam" id="PF01425">
    <property type="entry name" value="Amidase"/>
    <property type="match status" value="1"/>
</dbReference>
<dbReference type="SUPFAM" id="SSF75304">
    <property type="entry name" value="Amidase signature (AS) enzymes"/>
    <property type="match status" value="1"/>
</dbReference>
<dbReference type="PROSITE" id="PS00571">
    <property type="entry name" value="AMIDASES"/>
    <property type="match status" value="1"/>
</dbReference>
<keyword id="KW-0067">ATP-binding</keyword>
<keyword id="KW-0436">Ligase</keyword>
<keyword id="KW-0547">Nucleotide-binding</keyword>
<keyword id="KW-0648">Protein biosynthesis</keyword>
<keyword id="KW-1185">Reference proteome</keyword>
<evidence type="ECO:0000255" key="1">
    <source>
        <dbReference type="HAMAP-Rule" id="MF_00120"/>
    </source>
</evidence>
<proteinExistence type="inferred from homology"/>
<accession>Q30SH9</accession>
<gene>
    <name evidence="1" type="primary">gatA</name>
    <name type="ordered locus">Suden_0773</name>
</gene>
<sequence length="447" mass="48483">MITLKEALKLSKDELENFKNDLKAKIEANPELNAYIDIYNIGDGVPIAIKDNIQVKDWSVTSGSNILQGYIAPYNATVIEKMLSAGLSPFGRTNMDEFAMGSTTESSFYGKTLNPHNKDCVPGGSSGGSAAAVGAGLAIAALGSDTGGSIRQPASFCGIVGMKPTYGRVSRYGLGAYASSLDQIGPMTQNVEDAAILYDIISGHDEKDSTSAHKNDKVSDKLNPNRKIRIAVLPKHIQNASEDVKKAYELAINALKKVGHEIVEAELMDAKFDISAYYITATAEATTNLARYDGIRYGNRVVGKDLNDTFVQTRSQGFGDEVKRRILLGNFVLSSGYYEAYYVKAQKTRHLIKDQYSKIFENVDLILSPVAPTTANKFGELSTPMEMYLSDLYTISVNLAGLPAISVPISKSSEGMPIGLQLIANAYDEQTLFDGALSLEREINYNA</sequence>